<keyword id="KW-0408">Iron</keyword>
<keyword id="KW-0479">Metal-binding</keyword>
<keyword id="KW-0520">NAD</keyword>
<keyword id="KW-0784">Thiamine biosynthesis</keyword>
<keyword id="KW-0808">Transferase</keyword>
<sequence>MELKIARAIIKHGLEDLYEYSEVDVAVVGAGPAGLTAARYLAERGHRVVVYERRFSFGGGIGPGGNMIPKIVVQEEAVPVLKDFRVRYRPVGDGLYTVDPAELIAKLAAGAIDAGAKIILGVHVDDVIFRGDPPRVAGLLWVWTPIQMSGSHVDPLYTQARAVLDATGHDAEVISIASRKVPELGVEVRGEKSAWAEVSEKLVVEHTGRVAPGLYAAGMAVCAVHGLPRMGPIFGGMLLSGRRAAEIIHKDLVEYAVRA</sequence>
<accession>B1YDX0</accession>
<evidence type="ECO:0000255" key="1">
    <source>
        <dbReference type="HAMAP-Rule" id="MF_00304"/>
    </source>
</evidence>
<reference key="1">
    <citation type="submission" date="2008-03" db="EMBL/GenBank/DDBJ databases">
        <title>Complete sequence of Thermoproteus neutrophilus V24Sta.</title>
        <authorList>
            <consortium name="US DOE Joint Genome Institute"/>
            <person name="Copeland A."/>
            <person name="Lucas S."/>
            <person name="Lapidus A."/>
            <person name="Glavina del Rio T."/>
            <person name="Dalin E."/>
            <person name="Tice H."/>
            <person name="Bruce D."/>
            <person name="Goodwin L."/>
            <person name="Pitluck S."/>
            <person name="Sims D."/>
            <person name="Brettin T."/>
            <person name="Detter J.C."/>
            <person name="Han C."/>
            <person name="Kuske C.R."/>
            <person name="Schmutz J."/>
            <person name="Larimer F."/>
            <person name="Land M."/>
            <person name="Hauser L."/>
            <person name="Kyrpides N."/>
            <person name="Mikhailova N."/>
            <person name="Biddle J.F."/>
            <person name="Zhang Z."/>
            <person name="Fitz-Gibbon S.T."/>
            <person name="Lowe T.M."/>
            <person name="Saltikov C."/>
            <person name="House C.H."/>
            <person name="Richardson P."/>
        </authorList>
    </citation>
    <scope>NUCLEOTIDE SEQUENCE [LARGE SCALE GENOMIC DNA]</scope>
    <source>
        <strain>DSM 2338 / JCM 9278 / NBRC 100436 / V24Sta</strain>
    </source>
</reference>
<proteinExistence type="inferred from homology"/>
<name>THI4_PYRNV</name>
<protein>
    <recommendedName>
        <fullName evidence="1">Thiamine thiazole synthase</fullName>
        <ecNumber evidence="1">2.4.2.59</ecNumber>
    </recommendedName>
</protein>
<organism>
    <name type="scientific">Pyrobaculum neutrophilum (strain DSM 2338 / JCM 9278 / NBRC 100436 / V24Sta)</name>
    <name type="common">Thermoproteus neutrophilus</name>
    <dbReference type="NCBI Taxonomy" id="444157"/>
    <lineage>
        <taxon>Archaea</taxon>
        <taxon>Thermoproteota</taxon>
        <taxon>Thermoprotei</taxon>
        <taxon>Thermoproteales</taxon>
        <taxon>Thermoproteaceae</taxon>
        <taxon>Pyrobaculum</taxon>
    </lineage>
</organism>
<gene>
    <name evidence="1" type="primary">thi4</name>
    <name type="ordered locus">Tneu_1052</name>
</gene>
<dbReference type="EC" id="2.4.2.59" evidence="1"/>
<dbReference type="EMBL" id="CP001014">
    <property type="protein sequence ID" value="ACB39983.1"/>
    <property type="molecule type" value="Genomic_DNA"/>
</dbReference>
<dbReference type="RefSeq" id="WP_012350403.1">
    <property type="nucleotide sequence ID" value="NC_010525.1"/>
</dbReference>
<dbReference type="SMR" id="B1YDX0"/>
<dbReference type="STRING" id="444157.Tneu_1052"/>
<dbReference type="GeneID" id="6164400"/>
<dbReference type="KEGG" id="tne:Tneu_1052"/>
<dbReference type="eggNOG" id="arCOG00574">
    <property type="taxonomic scope" value="Archaea"/>
</dbReference>
<dbReference type="HOGENOM" id="CLU_053727_2_0_2"/>
<dbReference type="OrthoDB" id="4240at2157"/>
<dbReference type="UniPathway" id="UPA00060"/>
<dbReference type="Proteomes" id="UP000001694">
    <property type="component" value="Chromosome"/>
</dbReference>
<dbReference type="GO" id="GO:0005506">
    <property type="term" value="F:iron ion binding"/>
    <property type="evidence" value="ECO:0007669"/>
    <property type="project" value="UniProtKB-UniRule"/>
</dbReference>
<dbReference type="GO" id="GO:0016763">
    <property type="term" value="F:pentosyltransferase activity"/>
    <property type="evidence" value="ECO:0007669"/>
    <property type="project" value="UniProtKB-UniRule"/>
</dbReference>
<dbReference type="GO" id="GO:0009228">
    <property type="term" value="P:thiamine biosynthetic process"/>
    <property type="evidence" value="ECO:0007669"/>
    <property type="project" value="UniProtKB-KW"/>
</dbReference>
<dbReference type="GO" id="GO:0009229">
    <property type="term" value="P:thiamine diphosphate biosynthetic process"/>
    <property type="evidence" value="ECO:0007669"/>
    <property type="project" value="UniProtKB-UniRule"/>
</dbReference>
<dbReference type="GO" id="GO:0052837">
    <property type="term" value="P:thiazole biosynthetic process"/>
    <property type="evidence" value="ECO:0007669"/>
    <property type="project" value="UniProtKB-UniRule"/>
</dbReference>
<dbReference type="Gene3D" id="3.50.50.60">
    <property type="entry name" value="FAD/NAD(P)-binding domain"/>
    <property type="match status" value="1"/>
</dbReference>
<dbReference type="HAMAP" id="MF_00304">
    <property type="entry name" value="Thi4"/>
    <property type="match status" value="1"/>
</dbReference>
<dbReference type="InterPro" id="IPR036188">
    <property type="entry name" value="FAD/NAD-bd_sf"/>
</dbReference>
<dbReference type="InterPro" id="IPR002922">
    <property type="entry name" value="Thi4_fam"/>
</dbReference>
<dbReference type="InterPro" id="IPR022828">
    <property type="entry name" value="Thi4_prok"/>
</dbReference>
<dbReference type="NCBIfam" id="TIGR00292">
    <property type="entry name" value="sulfide-dependent adenosine diphosphate thiazole synthase"/>
    <property type="match status" value="1"/>
</dbReference>
<dbReference type="PANTHER" id="PTHR43422">
    <property type="entry name" value="THIAMINE THIAZOLE SYNTHASE"/>
    <property type="match status" value="1"/>
</dbReference>
<dbReference type="PANTHER" id="PTHR43422:SF3">
    <property type="entry name" value="THIAMINE THIAZOLE SYNTHASE"/>
    <property type="match status" value="1"/>
</dbReference>
<dbReference type="Pfam" id="PF01946">
    <property type="entry name" value="Thi4"/>
    <property type="match status" value="1"/>
</dbReference>
<dbReference type="PRINTS" id="PR00419">
    <property type="entry name" value="ADXRDTASE"/>
</dbReference>
<dbReference type="SUPFAM" id="SSF51905">
    <property type="entry name" value="FAD/NAD(P)-binding domain"/>
    <property type="match status" value="1"/>
</dbReference>
<feature type="chain" id="PRO_1000115615" description="Thiamine thiazole synthase">
    <location>
        <begin position="1"/>
        <end position="259"/>
    </location>
</feature>
<feature type="binding site" description="in other chain" evidence="1">
    <location>
        <position position="33"/>
    </location>
    <ligand>
        <name>NAD(+)</name>
        <dbReference type="ChEBI" id="CHEBI:57540"/>
        <note>ligand shared between two adjacent protomers</note>
    </ligand>
</feature>
<feature type="binding site" description="in other chain" evidence="1">
    <location>
        <begin position="52"/>
        <end position="53"/>
    </location>
    <ligand>
        <name>NAD(+)</name>
        <dbReference type="ChEBI" id="CHEBI:57540"/>
        <note>ligand shared between two adjacent protomers</note>
    </ligand>
</feature>
<feature type="binding site" description="in other chain" evidence="1">
    <location>
        <position position="60"/>
    </location>
    <ligand>
        <name>NAD(+)</name>
        <dbReference type="ChEBI" id="CHEBI:57540"/>
        <note>ligand shared between two adjacent protomers</note>
    </ligand>
</feature>
<feature type="binding site" description="in other chain" evidence="1">
    <location>
        <position position="124"/>
    </location>
    <ligand>
        <name>NAD(+)</name>
        <dbReference type="ChEBI" id="CHEBI:57540"/>
        <note>ligand shared between two adjacent protomers</note>
    </ligand>
</feature>
<feature type="binding site" evidence="1">
    <location>
        <begin position="152"/>
        <end position="154"/>
    </location>
    <ligand>
        <name>NAD(+)</name>
        <dbReference type="ChEBI" id="CHEBI:57540"/>
        <note>ligand shared between two adjacent protomers</note>
    </ligand>
</feature>
<feature type="binding site" evidence="1">
    <location>
        <position position="154"/>
    </location>
    <ligand>
        <name>Fe cation</name>
        <dbReference type="ChEBI" id="CHEBI:24875"/>
        <note>ligand shared between two adjacent protomers</note>
    </ligand>
</feature>
<feature type="binding site" description="in other chain" evidence="1">
    <location>
        <position position="169"/>
    </location>
    <ligand>
        <name>Fe cation</name>
        <dbReference type="ChEBI" id="CHEBI:24875"/>
        <note>ligand shared between two adjacent protomers</note>
    </ligand>
</feature>
<feature type="binding site" description="in other chain" evidence="1">
    <location>
        <position position="219"/>
    </location>
    <ligand>
        <name>NAD(+)</name>
        <dbReference type="ChEBI" id="CHEBI:57540"/>
        <note>ligand shared between two adjacent protomers</note>
    </ligand>
</feature>
<feature type="binding site" evidence="1">
    <location>
        <position position="229"/>
    </location>
    <ligand>
        <name>glycine</name>
        <dbReference type="ChEBI" id="CHEBI:57305"/>
    </ligand>
</feature>
<comment type="function">
    <text evidence="1">Involved in the biosynthesis of the thiazole moiety of thiamine. Catalyzes the conversion of NAD and glycine to adenosine diphosphate 5-(2-hydroxyethyl)-4-methylthiazole-2-carboxylate (ADT), an adenylated thiazole intermediate, using free sulfide as a source of sulfur.</text>
</comment>
<comment type="catalytic activity">
    <reaction evidence="1">
        <text>hydrogen sulfide + glycine + NAD(+) = ADP-5-ethyl-4-methylthiazole-2-carboxylate + nicotinamide + 3 H2O + H(+)</text>
        <dbReference type="Rhea" id="RHEA:55704"/>
        <dbReference type="ChEBI" id="CHEBI:15377"/>
        <dbReference type="ChEBI" id="CHEBI:15378"/>
        <dbReference type="ChEBI" id="CHEBI:17154"/>
        <dbReference type="ChEBI" id="CHEBI:29919"/>
        <dbReference type="ChEBI" id="CHEBI:57305"/>
        <dbReference type="ChEBI" id="CHEBI:57540"/>
        <dbReference type="ChEBI" id="CHEBI:139151"/>
        <dbReference type="EC" id="2.4.2.59"/>
    </reaction>
</comment>
<comment type="cofactor">
    <cofactor evidence="1">
        <name>Fe(2+)</name>
        <dbReference type="ChEBI" id="CHEBI:29033"/>
    </cofactor>
</comment>
<comment type="pathway">
    <text evidence="1">Cofactor biosynthesis; thiamine diphosphate biosynthesis.</text>
</comment>
<comment type="subunit">
    <text evidence="1">Homooctamer; tetramer of dimers.</text>
</comment>
<comment type="similarity">
    <text evidence="1">Belongs to the THI4 family.</text>
</comment>